<protein>
    <recommendedName>
        <fullName>Homeobox protein Hox-A10</fullName>
    </recommendedName>
    <alternativeName>
        <fullName>Homeobox protein Hox-1.8</fullName>
    </alternativeName>
</protein>
<proteinExistence type="evidence at protein level"/>
<feature type="chain" id="PRO_0000200091" description="Homeobox protein Hox-A10">
    <location>
        <begin position="1"/>
        <end position="416"/>
    </location>
</feature>
<feature type="DNA-binding region" description="Homeobox" evidence="2">
    <location>
        <begin position="342"/>
        <end position="401"/>
    </location>
</feature>
<feature type="region of interest" description="Disordered" evidence="3">
    <location>
        <begin position="40"/>
        <end position="60"/>
    </location>
</feature>
<feature type="region of interest" description="Disordered" evidence="3">
    <location>
        <begin position="81"/>
        <end position="167"/>
    </location>
</feature>
<feature type="region of interest" description="Disordered" evidence="3">
    <location>
        <begin position="228"/>
        <end position="345"/>
    </location>
</feature>
<feature type="compositionally biased region" description="Gly residues" evidence="3">
    <location>
        <begin position="40"/>
        <end position="58"/>
    </location>
</feature>
<feature type="compositionally biased region" description="Gly residues" evidence="3">
    <location>
        <begin position="93"/>
        <end position="108"/>
    </location>
</feature>
<feature type="compositionally biased region" description="Pro residues" evidence="3">
    <location>
        <begin position="131"/>
        <end position="140"/>
    </location>
</feature>
<feature type="compositionally biased region" description="Pro residues" evidence="3">
    <location>
        <begin position="147"/>
        <end position="159"/>
    </location>
</feature>
<feature type="compositionally biased region" description="Gly residues" evidence="3">
    <location>
        <begin position="231"/>
        <end position="240"/>
    </location>
</feature>
<feature type="compositionally biased region" description="Low complexity" evidence="3">
    <location>
        <begin position="300"/>
        <end position="314"/>
    </location>
</feature>
<feature type="splice variant" id="VSP_002386" description="In isoform 2." evidence="4">
    <location>
        <begin position="1"/>
        <end position="322"/>
    </location>
</feature>
<feature type="splice variant" id="VSP_002387" description="In isoform 2." evidence="4">
    <original>DSL</original>
    <variation>MSQ</variation>
    <location>
        <begin position="323"/>
        <end position="325"/>
    </location>
</feature>
<feature type="sequence conflict" description="In Ref. 2; AAH50839." evidence="5" ref="2">
    <original>V</original>
    <variation>G</variation>
    <location>
        <position position="44"/>
    </location>
</feature>
<feature type="sequence conflict" description="In Ref. 1; AAA67125." evidence="5" ref="1">
    <original>Q</original>
    <variation>E</variation>
    <location>
        <position position="241"/>
    </location>
</feature>
<organism>
    <name type="scientific">Mus musculus</name>
    <name type="common">Mouse</name>
    <dbReference type="NCBI Taxonomy" id="10090"/>
    <lineage>
        <taxon>Eukaryota</taxon>
        <taxon>Metazoa</taxon>
        <taxon>Chordata</taxon>
        <taxon>Craniata</taxon>
        <taxon>Vertebrata</taxon>
        <taxon>Euteleostomi</taxon>
        <taxon>Mammalia</taxon>
        <taxon>Eutheria</taxon>
        <taxon>Euarchontoglires</taxon>
        <taxon>Glires</taxon>
        <taxon>Rodentia</taxon>
        <taxon>Myomorpha</taxon>
        <taxon>Muroidea</taxon>
        <taxon>Muridae</taxon>
        <taxon>Murinae</taxon>
        <taxon>Mus</taxon>
        <taxon>Mus</taxon>
    </lineage>
</organism>
<dbReference type="EMBL" id="L08757">
    <property type="protein sequence ID" value="AAA67125.1"/>
    <property type="status" value="ALT_INIT"/>
    <property type="molecule type" value="mRNA"/>
</dbReference>
<dbReference type="EMBL" id="L08758">
    <property type="protein sequence ID" value="AAD15230.1"/>
    <property type="molecule type" value="mRNA"/>
</dbReference>
<dbReference type="EMBL" id="BC050839">
    <property type="protein sequence ID" value="AAH50839.1"/>
    <property type="status" value="ALT_INIT"/>
    <property type="molecule type" value="mRNA"/>
</dbReference>
<dbReference type="EMBL" id="M81659">
    <property type="protein sequence ID" value="AAA63312.1"/>
    <property type="molecule type" value="Genomic_DNA"/>
</dbReference>
<dbReference type="CCDS" id="CCDS20147.2">
    <molecule id="P31310-1"/>
</dbReference>
<dbReference type="CCDS" id="CCDS51775.1">
    <molecule id="P31310-2"/>
</dbReference>
<dbReference type="PIR" id="I49754">
    <property type="entry name" value="I49754"/>
</dbReference>
<dbReference type="RefSeq" id="NP_001116422.1">
    <molecule id="P31310-2"/>
    <property type="nucleotide sequence ID" value="NM_001122950.3"/>
</dbReference>
<dbReference type="RefSeq" id="NP_001406334.1">
    <molecule id="P31310-2"/>
    <property type="nucleotide sequence ID" value="NM_001419405.1"/>
</dbReference>
<dbReference type="RefSeq" id="NP_032289.2">
    <molecule id="P31310-1"/>
    <property type="nucleotide sequence ID" value="NM_008263.4"/>
</dbReference>
<dbReference type="SMR" id="P31310"/>
<dbReference type="BioGRID" id="200363">
    <property type="interactions" value="21"/>
</dbReference>
<dbReference type="CORUM" id="P31310"/>
<dbReference type="FunCoup" id="P31310">
    <property type="interactions" value="898"/>
</dbReference>
<dbReference type="IntAct" id="P31310">
    <property type="interactions" value="7"/>
</dbReference>
<dbReference type="STRING" id="10090.ENSMUSP00000120276"/>
<dbReference type="iPTMnet" id="P31310"/>
<dbReference type="PhosphoSitePlus" id="P31310"/>
<dbReference type="jPOST" id="P31310"/>
<dbReference type="PaxDb" id="10090-ENSMUSP00000120276"/>
<dbReference type="ProteomicsDB" id="267179">
    <molecule id="P31310-1"/>
</dbReference>
<dbReference type="ProteomicsDB" id="267180">
    <molecule id="P31310-2"/>
</dbReference>
<dbReference type="Antibodypedia" id="48441">
    <property type="antibodies" value="234 antibodies from 27 providers"/>
</dbReference>
<dbReference type="DNASU" id="15395"/>
<dbReference type="Ensembl" id="ENSMUST00000121043.2">
    <molecule id="P31310-2"/>
    <property type="protein sequence ID" value="ENSMUSP00000112872.2"/>
    <property type="gene ID" value="ENSMUSG00000000938.12"/>
</dbReference>
<dbReference type="Ensembl" id="ENSMUST00000125581.2">
    <molecule id="P31310-1"/>
    <property type="protein sequence ID" value="ENSMUSP00000120276.2"/>
    <property type="gene ID" value="ENSMUSG00000000938.12"/>
</dbReference>
<dbReference type="GeneID" id="15395"/>
<dbReference type="KEGG" id="mmu:15395"/>
<dbReference type="UCSC" id="uc009bym.1">
    <molecule id="P31310-1"/>
    <property type="organism name" value="mouse"/>
</dbReference>
<dbReference type="UCSC" id="uc012ema.1">
    <molecule id="P31310-2"/>
    <property type="organism name" value="mouse"/>
</dbReference>
<dbReference type="AGR" id="MGI:96171"/>
<dbReference type="CTD" id="3206"/>
<dbReference type="MGI" id="MGI:96171">
    <property type="gene designation" value="Hoxa10"/>
</dbReference>
<dbReference type="VEuPathDB" id="HostDB:ENSMUSG00000000938"/>
<dbReference type="eggNOG" id="KOG0487">
    <property type="taxonomic scope" value="Eukaryota"/>
</dbReference>
<dbReference type="GeneTree" id="ENSGT00940000162440"/>
<dbReference type="HOGENOM" id="CLU_057871_0_0_1"/>
<dbReference type="InParanoid" id="P31310"/>
<dbReference type="OMA" id="YPTAMSC"/>
<dbReference type="OrthoDB" id="6159439at2759"/>
<dbReference type="PhylomeDB" id="P31310"/>
<dbReference type="TreeFam" id="TF317819"/>
<dbReference type="BioGRID-ORCS" id="15395">
    <property type="hits" value="2 hits in 75 CRISPR screens"/>
</dbReference>
<dbReference type="ChiTaRS" id="Hoxa10">
    <property type="organism name" value="mouse"/>
</dbReference>
<dbReference type="PRO" id="PR:P31310"/>
<dbReference type="Proteomes" id="UP000000589">
    <property type="component" value="Chromosome 6"/>
</dbReference>
<dbReference type="RNAct" id="P31310">
    <property type="molecule type" value="protein"/>
</dbReference>
<dbReference type="Bgee" id="ENSMUSG00000000938">
    <property type="expression patterns" value="Expressed in gastrula and 152 other cell types or tissues"/>
</dbReference>
<dbReference type="GO" id="GO:0005737">
    <property type="term" value="C:cytoplasm"/>
    <property type="evidence" value="ECO:0000250"/>
    <property type="project" value="UniProtKB"/>
</dbReference>
<dbReference type="GO" id="GO:0005654">
    <property type="term" value="C:nucleoplasm"/>
    <property type="evidence" value="ECO:0007669"/>
    <property type="project" value="Ensembl"/>
</dbReference>
<dbReference type="GO" id="GO:0005634">
    <property type="term" value="C:nucleus"/>
    <property type="evidence" value="ECO:0000250"/>
    <property type="project" value="UniProtKB"/>
</dbReference>
<dbReference type="GO" id="GO:0005667">
    <property type="term" value="C:transcription regulator complex"/>
    <property type="evidence" value="ECO:0000314"/>
    <property type="project" value="MGI"/>
</dbReference>
<dbReference type="GO" id="GO:0003677">
    <property type="term" value="F:DNA binding"/>
    <property type="evidence" value="ECO:0000304"/>
    <property type="project" value="MGI"/>
</dbReference>
<dbReference type="GO" id="GO:0001228">
    <property type="term" value="F:DNA-binding transcription activator activity, RNA polymerase II-specific"/>
    <property type="evidence" value="ECO:0007669"/>
    <property type="project" value="Ensembl"/>
</dbReference>
<dbReference type="GO" id="GO:0042826">
    <property type="term" value="F:histone deacetylase binding"/>
    <property type="evidence" value="ECO:0007669"/>
    <property type="project" value="Ensembl"/>
</dbReference>
<dbReference type="GO" id="GO:0000978">
    <property type="term" value="F:RNA polymerase II cis-regulatory region sequence-specific DNA binding"/>
    <property type="evidence" value="ECO:0007669"/>
    <property type="project" value="Ensembl"/>
</dbReference>
<dbReference type="GO" id="GO:0009952">
    <property type="term" value="P:anterior/posterior pattern specification"/>
    <property type="evidence" value="ECO:0000316"/>
    <property type="project" value="MGI"/>
</dbReference>
<dbReference type="GO" id="GO:0030326">
    <property type="term" value="P:embryonic limb morphogenesis"/>
    <property type="evidence" value="ECO:0000316"/>
    <property type="project" value="MGI"/>
</dbReference>
<dbReference type="GO" id="GO:0008584">
    <property type="term" value="P:male gonad development"/>
    <property type="evidence" value="ECO:0000316"/>
    <property type="project" value="MGI"/>
</dbReference>
<dbReference type="GO" id="GO:0030850">
    <property type="term" value="P:prostate gland development"/>
    <property type="evidence" value="ECO:0007669"/>
    <property type="project" value="Ensembl"/>
</dbReference>
<dbReference type="GO" id="GO:0009954">
    <property type="term" value="P:proximal/distal pattern formation"/>
    <property type="evidence" value="ECO:0000316"/>
    <property type="project" value="MGI"/>
</dbReference>
<dbReference type="GO" id="GO:0010468">
    <property type="term" value="P:regulation of gene expression"/>
    <property type="evidence" value="ECO:0000316"/>
    <property type="project" value="MGI"/>
</dbReference>
<dbReference type="GO" id="GO:0043627">
    <property type="term" value="P:response to estrogen"/>
    <property type="evidence" value="ECO:0007669"/>
    <property type="project" value="Ensembl"/>
</dbReference>
<dbReference type="GO" id="GO:0033574">
    <property type="term" value="P:response to testosterone"/>
    <property type="evidence" value="ECO:0007669"/>
    <property type="project" value="Ensembl"/>
</dbReference>
<dbReference type="GO" id="GO:0007338">
    <property type="term" value="P:single fertilization"/>
    <property type="evidence" value="ECO:0000316"/>
    <property type="project" value="MGI"/>
</dbReference>
<dbReference type="GO" id="GO:0001501">
    <property type="term" value="P:skeletal system development"/>
    <property type="evidence" value="ECO:0000316"/>
    <property type="project" value="MGI"/>
</dbReference>
<dbReference type="GO" id="GO:0007283">
    <property type="term" value="P:spermatogenesis"/>
    <property type="evidence" value="ECO:0000316"/>
    <property type="project" value="MGI"/>
</dbReference>
<dbReference type="GO" id="GO:0060065">
    <property type="term" value="P:uterus development"/>
    <property type="evidence" value="ECO:0000316"/>
    <property type="project" value="MGI"/>
</dbReference>
<dbReference type="CDD" id="cd00086">
    <property type="entry name" value="homeodomain"/>
    <property type="match status" value="1"/>
</dbReference>
<dbReference type="FunFam" id="1.10.10.60:FF:000018">
    <property type="entry name" value="Homeobox A10"/>
    <property type="match status" value="1"/>
</dbReference>
<dbReference type="Gene3D" id="1.10.10.60">
    <property type="entry name" value="Homeodomain-like"/>
    <property type="match status" value="1"/>
</dbReference>
<dbReference type="InterPro" id="IPR001356">
    <property type="entry name" value="HD"/>
</dbReference>
<dbReference type="InterPro" id="IPR020479">
    <property type="entry name" value="HD_metazoa"/>
</dbReference>
<dbReference type="InterPro" id="IPR017970">
    <property type="entry name" value="Homeobox_CS"/>
</dbReference>
<dbReference type="InterPro" id="IPR009057">
    <property type="entry name" value="Homeodomain-like_sf"/>
</dbReference>
<dbReference type="InterPro" id="IPR046333">
    <property type="entry name" value="HXA10/ABDB-like"/>
</dbReference>
<dbReference type="PANTHER" id="PTHR45874">
    <property type="entry name" value="HOMEOBOX PROTEIN ABDOMINAL-B"/>
    <property type="match status" value="1"/>
</dbReference>
<dbReference type="PANTHER" id="PTHR45874:SF1">
    <property type="entry name" value="HOMEOBOX PROTEIN HOX-A10"/>
    <property type="match status" value="1"/>
</dbReference>
<dbReference type="Pfam" id="PF00046">
    <property type="entry name" value="Homeodomain"/>
    <property type="match status" value="1"/>
</dbReference>
<dbReference type="PRINTS" id="PR00024">
    <property type="entry name" value="HOMEOBOX"/>
</dbReference>
<dbReference type="SMART" id="SM00389">
    <property type="entry name" value="HOX"/>
    <property type="match status" value="1"/>
</dbReference>
<dbReference type="SUPFAM" id="SSF46689">
    <property type="entry name" value="Homeodomain-like"/>
    <property type="match status" value="1"/>
</dbReference>
<dbReference type="PROSITE" id="PS00027">
    <property type="entry name" value="HOMEOBOX_1"/>
    <property type="match status" value="1"/>
</dbReference>
<dbReference type="PROSITE" id="PS50071">
    <property type="entry name" value="HOMEOBOX_2"/>
    <property type="match status" value="1"/>
</dbReference>
<comment type="function">
    <text>Sequence-specific transcription factor which is part of a developmental regulatory system that provides cells with specific positional identities on the anterior-posterior axis. Binds to the DNA sequence 5'-AA[AT]TTTTATTAC-3'.</text>
</comment>
<comment type="subunit">
    <text evidence="1">Interacts with SIRT2; the interaction is direct.</text>
</comment>
<comment type="subcellular location">
    <subcellularLocation>
        <location>Nucleus</location>
    </subcellularLocation>
</comment>
<comment type="alternative products">
    <event type="alternative splicing"/>
    <isoform>
        <id>P31310-1</id>
        <name>1</name>
        <name>a10-1</name>
        <sequence type="displayed"/>
    </isoform>
    <isoform>
        <id>P31310-2</id>
        <name>2</name>
        <name>a10-2</name>
        <sequence type="described" ref="VSP_002386 VSP_002387"/>
    </isoform>
</comment>
<comment type="tissue specificity">
    <text>Expressed in the developing limb bud where it is restricted to the mesenchyme along the proximal-distal axis. Also found in developing gut and urogenital tract. In adult tissue, both forms found in kidney but only isoform 1 is expressed in skeletal muscle.</text>
</comment>
<comment type="developmental stage">
    <text>Embryonic expression increases from day 9 to day 12 and then declines to day 15.</text>
</comment>
<comment type="similarity">
    <text evidence="5">Belongs to the Abd-B homeobox family.</text>
</comment>
<comment type="sequence caution" evidence="5">
    <conflict type="erroneous initiation">
        <sequence resource="EMBL-CDS" id="AAA67125"/>
    </conflict>
    <text>Truncated N-terminus.</text>
</comment>
<comment type="sequence caution" evidence="5">
    <conflict type="erroneous initiation">
        <sequence resource="EMBL-CDS" id="AAH50839"/>
    </conflict>
    <text>Truncated N-terminus.</text>
</comment>
<name>HXA10_MOUSE</name>
<reference key="1">
    <citation type="journal article" date="1995" name="Mol. Cell. Biol.">
        <title>The expression pattern of the murine Hoxa-10 gene and the sequence recognition of its homeodomain reveal specific properties of Abdominal B-like genes.</title>
        <authorList>
            <person name="Benson G.V."/>
            <person name="Nguyen T.-H.E."/>
            <person name="Maas R.L."/>
        </authorList>
    </citation>
    <scope>NUCLEOTIDE SEQUENCE [MRNA] (ISOFORMS 1 AND 2)</scope>
    <source>
        <strain>CD-1</strain>
        <tissue>Kidney</tissue>
    </source>
</reference>
<reference key="2">
    <citation type="journal article" date="2004" name="Genome Res.">
        <title>The status, quality, and expansion of the NIH full-length cDNA project: the Mammalian Gene Collection (MGC).</title>
        <authorList>
            <consortium name="The MGC Project Team"/>
        </authorList>
    </citation>
    <scope>NUCLEOTIDE SEQUENCE [LARGE SCALE MRNA] OF 9-416 (ISOFORM 1)</scope>
    <source>
        <tissue>Limb</tissue>
    </source>
</reference>
<reference key="3">
    <citation type="journal article" date="1991" name="Proc. Natl. Acad. Sci. U.S.A.">
        <title>Identification of 10 murine homeobox genes.</title>
        <authorList>
            <person name="Singh G."/>
            <person name="Kaur S."/>
            <person name="Stock J.L."/>
            <person name="Jenkins N.A."/>
            <person name="Gilbert D.J."/>
            <person name="Copeland N.G."/>
            <person name="Potter S.S."/>
        </authorList>
    </citation>
    <scope>NUCLEOTIDE SEQUENCE [GENOMIC DNA] OF 342-401</scope>
</reference>
<reference key="4">
    <citation type="journal article" date="1991" name="Proc. Natl. Acad. Sci. U.S.A.">
        <title>Detection of homeobox genes in development and evolution.</title>
        <authorList>
            <person name="Murtha M.T."/>
            <person name="Leckman J.F."/>
            <person name="Ruddle F.H."/>
        </authorList>
    </citation>
    <scope>NUCLEOTIDE SEQUENCE [GENOMIC DNA] OF 363-387</scope>
    <source>
        <strain>C57BL/6J</strain>
        <tissue>Spleen</tissue>
    </source>
</reference>
<reference key="5">
    <citation type="journal article" date="2010" name="Cell">
        <title>A tissue-specific atlas of mouse protein phosphorylation and expression.</title>
        <authorList>
            <person name="Huttlin E.L."/>
            <person name="Jedrychowski M.P."/>
            <person name="Elias J.E."/>
            <person name="Goswami T."/>
            <person name="Rad R."/>
            <person name="Beausoleil S.A."/>
            <person name="Villen J."/>
            <person name="Haas W."/>
            <person name="Sowa M.E."/>
            <person name="Gygi S.P."/>
        </authorList>
    </citation>
    <scope>IDENTIFICATION BY MASS SPECTROMETRY [LARGE SCALE ANALYSIS]</scope>
    <source>
        <tissue>Kidney</tissue>
    </source>
</reference>
<accession>P31310</accession>
<accession>Q80Y22</accession>
<keyword id="KW-0025">Alternative splicing</keyword>
<keyword id="KW-0217">Developmental protein</keyword>
<keyword id="KW-0238">DNA-binding</keyword>
<keyword id="KW-0371">Homeobox</keyword>
<keyword id="KW-0539">Nucleus</keyword>
<keyword id="KW-1185">Reference proteome</keyword>
<keyword id="KW-0804">Transcription</keyword>
<keyword id="KW-0805">Transcription regulation</keyword>
<gene>
    <name type="primary">Hoxa10</name>
    <name type="synonym">Hox-1.8</name>
    <name type="synonym">Hoxa-10</name>
</gene>
<sequence length="416" mass="43292">MSARKGYLLPSPNYPTTMSCSESPAANSFLVDSLISSGRGEAGVGGGSAGGGGGGYYAHGGVYLPPASDLPYGLQSCGLFPALGSKRNEAPSPGGGGGGGSGGLGPGTHGYAPAPLDLWLDAPRSCRMEPPDGPPPPQPQPQQQQQQPPPPPPQPPQPQPQATSCSFAQNIKEESSYCLYDAADKCPKGSAAADLAPFPRGPPPDGCALGASSGVPVPGYFRLSQAYGTAKGFGSGGGGTQQLASPFPAQPPGRGFDPPPALASGSTEAAGKERVLDSTPPPTLVCTGGGGSQGDEEAHASSSAAEELSPAPSENSKASPEKDSLGSSKGENAANWLTAKSGRKKRCPYTKHQTLELEKEFLFNMYLTRERRLEISRSVHLTDRQVKIWFQNRRMKLKKMNRENRIRELTANFNFS</sequence>
<evidence type="ECO:0000250" key="1"/>
<evidence type="ECO:0000255" key="2">
    <source>
        <dbReference type="PROSITE-ProRule" id="PRU00108"/>
    </source>
</evidence>
<evidence type="ECO:0000256" key="3">
    <source>
        <dbReference type="SAM" id="MobiDB-lite"/>
    </source>
</evidence>
<evidence type="ECO:0000303" key="4">
    <source>
    </source>
</evidence>
<evidence type="ECO:0000305" key="5"/>